<protein>
    <recommendedName>
        <fullName>AMSH-like protease sst2</fullName>
        <ecNumber>3.4.19.-</ecNumber>
    </recommendedName>
    <alternativeName>
        <fullName>Suppressor of ste12 deletion protein 2</fullName>
    </alternativeName>
</protein>
<gene>
    <name type="primary">sst2</name>
    <name type="ORF">SPAC19B12.10</name>
</gene>
<keyword id="KW-0002">3D-structure</keyword>
<keyword id="KW-0963">Cytoplasm</keyword>
<keyword id="KW-0967">Endosome</keyword>
<keyword id="KW-0378">Hydrolase</keyword>
<keyword id="KW-0479">Metal-binding</keyword>
<keyword id="KW-0482">Metalloprotease</keyword>
<keyword id="KW-0597">Phosphoprotein</keyword>
<keyword id="KW-0645">Protease</keyword>
<keyword id="KW-1185">Reference proteome</keyword>
<keyword id="KW-0833">Ubl conjugation pathway</keyword>
<keyword id="KW-0862">Zinc</keyword>
<reference key="1">
    <citation type="journal article" date="2002" name="Nature">
        <title>The genome sequence of Schizosaccharomyces pombe.</title>
        <authorList>
            <person name="Wood V."/>
            <person name="Gwilliam R."/>
            <person name="Rajandream M.A."/>
            <person name="Lyne M.H."/>
            <person name="Lyne R."/>
            <person name="Stewart A."/>
            <person name="Sgouros J.G."/>
            <person name="Peat N."/>
            <person name="Hayles J."/>
            <person name="Baker S.G."/>
            <person name="Basham D."/>
            <person name="Bowman S."/>
            <person name="Brooks K."/>
            <person name="Brown D."/>
            <person name="Brown S."/>
            <person name="Chillingworth T."/>
            <person name="Churcher C.M."/>
            <person name="Collins M."/>
            <person name="Connor R."/>
            <person name="Cronin A."/>
            <person name="Davis P."/>
            <person name="Feltwell T."/>
            <person name="Fraser A."/>
            <person name="Gentles S."/>
            <person name="Goble A."/>
            <person name="Hamlin N."/>
            <person name="Harris D.E."/>
            <person name="Hidalgo J."/>
            <person name="Hodgson G."/>
            <person name="Holroyd S."/>
            <person name="Hornsby T."/>
            <person name="Howarth S."/>
            <person name="Huckle E.J."/>
            <person name="Hunt S."/>
            <person name="Jagels K."/>
            <person name="James K.D."/>
            <person name="Jones L."/>
            <person name="Jones M."/>
            <person name="Leather S."/>
            <person name="McDonald S."/>
            <person name="McLean J."/>
            <person name="Mooney P."/>
            <person name="Moule S."/>
            <person name="Mungall K.L."/>
            <person name="Murphy L.D."/>
            <person name="Niblett D."/>
            <person name="Odell C."/>
            <person name="Oliver K."/>
            <person name="O'Neil S."/>
            <person name="Pearson D."/>
            <person name="Quail M.A."/>
            <person name="Rabbinowitsch E."/>
            <person name="Rutherford K.M."/>
            <person name="Rutter S."/>
            <person name="Saunders D."/>
            <person name="Seeger K."/>
            <person name="Sharp S."/>
            <person name="Skelton J."/>
            <person name="Simmonds M.N."/>
            <person name="Squares R."/>
            <person name="Squares S."/>
            <person name="Stevens K."/>
            <person name="Taylor K."/>
            <person name="Taylor R.G."/>
            <person name="Tivey A."/>
            <person name="Walsh S.V."/>
            <person name="Warren T."/>
            <person name="Whitehead S."/>
            <person name="Woodward J.R."/>
            <person name="Volckaert G."/>
            <person name="Aert R."/>
            <person name="Robben J."/>
            <person name="Grymonprez B."/>
            <person name="Weltjens I."/>
            <person name="Vanstreels E."/>
            <person name="Rieger M."/>
            <person name="Schaefer M."/>
            <person name="Mueller-Auer S."/>
            <person name="Gabel C."/>
            <person name="Fuchs M."/>
            <person name="Duesterhoeft A."/>
            <person name="Fritzc C."/>
            <person name="Holzer E."/>
            <person name="Moestl D."/>
            <person name="Hilbert H."/>
            <person name="Borzym K."/>
            <person name="Langer I."/>
            <person name="Beck A."/>
            <person name="Lehrach H."/>
            <person name="Reinhardt R."/>
            <person name="Pohl T.M."/>
            <person name="Eger P."/>
            <person name="Zimmermann W."/>
            <person name="Wedler H."/>
            <person name="Wambutt R."/>
            <person name="Purnelle B."/>
            <person name="Goffeau A."/>
            <person name="Cadieu E."/>
            <person name="Dreano S."/>
            <person name="Gloux S."/>
            <person name="Lelaure V."/>
            <person name="Mottier S."/>
            <person name="Galibert F."/>
            <person name="Aves S.J."/>
            <person name="Xiang Z."/>
            <person name="Hunt C."/>
            <person name="Moore K."/>
            <person name="Hurst S.M."/>
            <person name="Lucas M."/>
            <person name="Rochet M."/>
            <person name="Gaillardin C."/>
            <person name="Tallada V.A."/>
            <person name="Garzon A."/>
            <person name="Thode G."/>
            <person name="Daga R.R."/>
            <person name="Cruzado L."/>
            <person name="Jimenez J."/>
            <person name="Sanchez M."/>
            <person name="del Rey F."/>
            <person name="Benito J."/>
            <person name="Dominguez A."/>
            <person name="Revuelta J.L."/>
            <person name="Moreno S."/>
            <person name="Armstrong J."/>
            <person name="Forsburg S.L."/>
            <person name="Cerutti L."/>
            <person name="Lowe T."/>
            <person name="McCombie W.R."/>
            <person name="Paulsen I."/>
            <person name="Potashkin J."/>
            <person name="Shpakovski G.V."/>
            <person name="Ussery D."/>
            <person name="Barrell B.G."/>
            <person name="Nurse P."/>
        </authorList>
    </citation>
    <scope>NUCLEOTIDE SEQUENCE [LARGE SCALE GENOMIC DNA]</scope>
    <source>
        <strain>972 / ATCC 24843</strain>
    </source>
</reference>
<reference key="2">
    <citation type="journal article" date="2006" name="Nat. Biotechnol.">
        <title>ORFeome cloning and global analysis of protein localization in the fission yeast Schizosaccharomyces pombe.</title>
        <authorList>
            <person name="Matsuyama A."/>
            <person name="Arai R."/>
            <person name="Yashiroda Y."/>
            <person name="Shirai A."/>
            <person name="Kamata A."/>
            <person name="Sekido S."/>
            <person name="Kobayashi Y."/>
            <person name="Hashimoto A."/>
            <person name="Hamamoto M."/>
            <person name="Hiraoka Y."/>
            <person name="Horinouchi S."/>
            <person name="Yoshida M."/>
        </authorList>
    </citation>
    <scope>SUBCELLULAR LOCATION [LARGE SCALE ANALYSIS]</scope>
</reference>
<reference key="3">
    <citation type="journal article" date="2007" name="Microbiology">
        <title>Essential roles of class E Vps proteins for sorting into multivesicular bodies in Schizosaccharomyces pombe.</title>
        <authorList>
            <person name="Iwaki T."/>
            <person name="Onishi M."/>
            <person name="Ikeuchi M."/>
            <person name="Kita A."/>
            <person name="Sugiura R."/>
            <person name="Giga-Hama Y."/>
            <person name="Fukui Y."/>
            <person name="Takegawa K."/>
        </authorList>
    </citation>
    <scope>FUNCTION</scope>
</reference>
<reference key="4">
    <citation type="journal article" date="2008" name="J. Proteome Res.">
        <title>Phosphoproteome analysis of fission yeast.</title>
        <authorList>
            <person name="Wilson-Grady J.T."/>
            <person name="Villen J."/>
            <person name="Gygi S.P."/>
        </authorList>
    </citation>
    <scope>PHOSPHORYLATION [LARGE SCALE ANALYSIS] AT THR-192</scope>
    <scope>IDENTIFICATION BY MASS SPECTROMETRY</scope>
</reference>
<accession>Q9P371</accession>
<comment type="function">
    <text evidence="1 5">Zinc metalloprotease that specifically cleaves 'Lys-63'-linked polyubiquitin chains. Does not cleave 'Lys-48'-linked polyubiquitin chains (By similarity). Plays a role in the multivesicular body (MVB) sorting pathway. Required for ubiquitin-dependent sorting of proteins into the endosome and subsequent trafficking to the vacuole. May regulate MVB sorting through deubiquitination of ubiquitinated ESCRT proteins.</text>
</comment>
<comment type="cofactor">
    <cofactor evidence="1">
        <name>Zn(2+)</name>
        <dbReference type="ChEBI" id="CHEBI:29105"/>
    </cofactor>
    <text evidence="1">Binds 2 Zn(2+) ions per subunit.</text>
</comment>
<comment type="subcellular location">
    <subcellularLocation>
        <location evidence="4">Cytoplasm</location>
    </subcellularLocation>
    <subcellularLocation>
        <location evidence="4">Endosome</location>
    </subcellularLocation>
</comment>
<comment type="domain">
    <text evidence="1">The JAMM motif is essential for the protease activity.</text>
</comment>
<comment type="similarity">
    <text evidence="7">Belongs to the peptidase M67C family.</text>
</comment>
<evidence type="ECO:0000250" key="1"/>
<evidence type="ECO:0000255" key="2">
    <source>
        <dbReference type="PROSITE-ProRule" id="PRU01182"/>
    </source>
</evidence>
<evidence type="ECO:0000256" key="3">
    <source>
        <dbReference type="SAM" id="MobiDB-lite"/>
    </source>
</evidence>
<evidence type="ECO:0000269" key="4">
    <source>
    </source>
</evidence>
<evidence type="ECO:0000269" key="5">
    <source>
    </source>
</evidence>
<evidence type="ECO:0000269" key="6">
    <source>
    </source>
</evidence>
<evidence type="ECO:0000305" key="7"/>
<evidence type="ECO:0007829" key="8">
    <source>
        <dbReference type="PDB" id="4JXE"/>
    </source>
</evidence>
<evidence type="ECO:0007829" key="9">
    <source>
        <dbReference type="PDB" id="4K1R"/>
    </source>
</evidence>
<proteinExistence type="evidence at protein level"/>
<feature type="chain" id="PRO_0000358323" description="AMSH-like protease sst2">
    <location>
        <begin position="1"/>
        <end position="435"/>
    </location>
</feature>
<feature type="domain" description="MPN" evidence="2">
    <location>
        <begin position="262"/>
        <end position="392"/>
    </location>
</feature>
<feature type="region of interest" description="Disordered" evidence="3">
    <location>
        <begin position="162"/>
        <end position="185"/>
    </location>
</feature>
<feature type="short sequence motif" description="JAMM motif" evidence="2">
    <location>
        <begin position="341"/>
        <end position="354"/>
    </location>
</feature>
<feature type="compositionally biased region" description="Low complexity" evidence="3">
    <location>
        <begin position="162"/>
        <end position="181"/>
    </location>
</feature>
<feature type="binding site" evidence="2">
    <location>
        <position position="341"/>
    </location>
    <ligand>
        <name>Zn(2+)</name>
        <dbReference type="ChEBI" id="CHEBI:29105"/>
        <label>1</label>
        <note>catalytic</note>
    </ligand>
</feature>
<feature type="binding site" evidence="2">
    <location>
        <position position="343"/>
    </location>
    <ligand>
        <name>Zn(2+)</name>
        <dbReference type="ChEBI" id="CHEBI:29105"/>
        <label>1</label>
        <note>catalytic</note>
    </ligand>
</feature>
<feature type="binding site" evidence="2">
    <location>
        <position position="354"/>
    </location>
    <ligand>
        <name>Zn(2+)</name>
        <dbReference type="ChEBI" id="CHEBI:29105"/>
        <label>1</label>
        <note>catalytic</note>
    </ligand>
</feature>
<feature type="binding site" evidence="1">
    <location>
        <position position="356"/>
    </location>
    <ligand>
        <name>Zn(2+)</name>
        <dbReference type="ChEBI" id="CHEBI:29105"/>
        <label>2</label>
    </ligand>
</feature>
<feature type="binding site" evidence="1">
    <location>
        <position position="397"/>
    </location>
    <ligand>
        <name>Zn(2+)</name>
        <dbReference type="ChEBI" id="CHEBI:29105"/>
        <label>2</label>
    </ligand>
</feature>
<feature type="binding site" evidence="1">
    <location>
        <position position="404"/>
    </location>
    <ligand>
        <name>Zn(2+)</name>
        <dbReference type="ChEBI" id="CHEBI:29105"/>
        <label>2</label>
    </ligand>
</feature>
<feature type="binding site" evidence="1">
    <location>
        <position position="406"/>
    </location>
    <ligand>
        <name>Zn(2+)</name>
        <dbReference type="ChEBI" id="CHEBI:29105"/>
        <label>2</label>
    </ligand>
</feature>
<feature type="site" description="Indirect zinc-binding" evidence="1">
    <location>
        <position position="286"/>
    </location>
</feature>
<feature type="modified residue" description="Phosphothreonine" evidence="6">
    <location>
        <position position="192"/>
    </location>
</feature>
<feature type="strand" evidence="8">
    <location>
        <begin position="263"/>
        <end position="266"/>
    </location>
</feature>
<feature type="helix" evidence="8">
    <location>
        <begin position="269"/>
        <end position="282"/>
    </location>
</feature>
<feature type="strand" evidence="8">
    <location>
        <begin position="288"/>
        <end position="296"/>
    </location>
</feature>
<feature type="strand" evidence="8">
    <location>
        <begin position="299"/>
        <end position="307"/>
    </location>
</feature>
<feature type="strand" evidence="9">
    <location>
        <begin position="309"/>
        <end position="312"/>
    </location>
</feature>
<feature type="strand" evidence="9">
    <location>
        <begin position="317"/>
        <end position="320"/>
    </location>
</feature>
<feature type="helix" evidence="8">
    <location>
        <begin position="323"/>
        <end position="331"/>
    </location>
</feature>
<feature type="strand" evidence="8">
    <location>
        <begin position="335"/>
        <end position="342"/>
    </location>
</feature>
<feature type="strand" evidence="8">
    <location>
        <begin position="344"/>
        <end position="346"/>
    </location>
</feature>
<feature type="helix" evidence="8">
    <location>
        <begin position="352"/>
        <end position="364"/>
    </location>
</feature>
<feature type="strand" evidence="8">
    <location>
        <begin position="369"/>
        <end position="374"/>
    </location>
</feature>
<feature type="turn" evidence="8">
    <location>
        <begin position="375"/>
        <end position="378"/>
    </location>
</feature>
<feature type="strand" evidence="8">
    <location>
        <begin position="379"/>
        <end position="385"/>
    </location>
</feature>
<feature type="helix" evidence="8">
    <location>
        <begin position="389"/>
        <end position="396"/>
    </location>
</feature>
<feature type="strand" evidence="9">
    <location>
        <begin position="401"/>
        <end position="403"/>
    </location>
</feature>
<feature type="strand" evidence="8">
    <location>
        <begin position="411"/>
        <end position="413"/>
    </location>
</feature>
<feature type="turn" evidence="8">
    <location>
        <begin position="416"/>
        <end position="419"/>
    </location>
</feature>
<feature type="strand" evidence="8">
    <location>
        <begin position="420"/>
        <end position="423"/>
    </location>
</feature>
<feature type="strand" evidence="8">
    <location>
        <begin position="428"/>
        <end position="431"/>
    </location>
</feature>
<name>SST2_SCHPO</name>
<organism>
    <name type="scientific">Schizosaccharomyces pombe (strain 972 / ATCC 24843)</name>
    <name type="common">Fission yeast</name>
    <dbReference type="NCBI Taxonomy" id="284812"/>
    <lineage>
        <taxon>Eukaryota</taxon>
        <taxon>Fungi</taxon>
        <taxon>Dikarya</taxon>
        <taxon>Ascomycota</taxon>
        <taxon>Taphrinomycotina</taxon>
        <taxon>Schizosaccharomycetes</taxon>
        <taxon>Schizosaccharomycetales</taxon>
        <taxon>Schizosaccharomycetaceae</taxon>
        <taxon>Schizosaccharomyces</taxon>
    </lineage>
</organism>
<dbReference type="EC" id="3.4.19.-"/>
<dbReference type="EMBL" id="CU329670">
    <property type="protein sequence ID" value="CAC00558.1"/>
    <property type="molecule type" value="Genomic_DNA"/>
</dbReference>
<dbReference type="RefSeq" id="NP_594773.1">
    <property type="nucleotide sequence ID" value="NM_001020200.2"/>
</dbReference>
<dbReference type="PDB" id="4JXE">
    <property type="method" value="X-ray"/>
    <property type="resolution" value="1.45 A"/>
    <property type="chains" value="A/B=245-435"/>
</dbReference>
<dbReference type="PDB" id="4K1R">
    <property type="method" value="X-ray"/>
    <property type="resolution" value="1.63 A"/>
    <property type="chains" value="A/C=245-435"/>
</dbReference>
<dbReference type="PDB" id="4MS7">
    <property type="method" value="X-ray"/>
    <property type="resolution" value="1.67 A"/>
    <property type="chains" value="A/B=245-435"/>
</dbReference>
<dbReference type="PDB" id="4MSD">
    <property type="method" value="X-ray"/>
    <property type="resolution" value="1.90 A"/>
    <property type="chains" value="A/B=245-435"/>
</dbReference>
<dbReference type="PDB" id="4MSJ">
    <property type="method" value="X-ray"/>
    <property type="resolution" value="1.80 A"/>
    <property type="chains" value="A/B/C=245-435"/>
</dbReference>
<dbReference type="PDB" id="4MSM">
    <property type="method" value="X-ray"/>
    <property type="resolution" value="1.74 A"/>
    <property type="chains" value="A/C=245-435"/>
</dbReference>
<dbReference type="PDB" id="4MSQ">
    <property type="method" value="X-ray"/>
    <property type="resolution" value="1.95 A"/>
    <property type="chains" value="A/C=245-435"/>
</dbReference>
<dbReference type="PDB" id="4NQL">
    <property type="method" value="X-ray"/>
    <property type="resolution" value="2.30 A"/>
    <property type="chains" value="A=221-435"/>
</dbReference>
<dbReference type="PDB" id="4PQT">
    <property type="method" value="X-ray"/>
    <property type="resolution" value="2.05 A"/>
    <property type="chains" value="A=245-435"/>
</dbReference>
<dbReference type="PDB" id="4ZD4">
    <property type="method" value="X-ray"/>
    <property type="resolution" value="1.63 A"/>
    <property type="chains" value="A/B=245-435"/>
</dbReference>
<dbReference type="PDB" id="4ZD5">
    <property type="method" value="X-ray"/>
    <property type="resolution" value="2.07 A"/>
    <property type="chains" value="A/B=245-435"/>
</dbReference>
<dbReference type="PDB" id="4ZFR">
    <property type="method" value="X-ray"/>
    <property type="resolution" value="1.72 A"/>
    <property type="chains" value="A=245-435"/>
</dbReference>
<dbReference type="PDB" id="4ZFT">
    <property type="method" value="X-ray"/>
    <property type="resolution" value="2.30 A"/>
    <property type="chains" value="A/C=245-435"/>
</dbReference>
<dbReference type="PDB" id="7LM3">
    <property type="method" value="X-ray"/>
    <property type="resolution" value="2.70 A"/>
    <property type="chains" value="A/B=245-435"/>
</dbReference>
<dbReference type="PDBsum" id="4JXE"/>
<dbReference type="PDBsum" id="4K1R"/>
<dbReference type="PDBsum" id="4MS7"/>
<dbReference type="PDBsum" id="4MSD"/>
<dbReference type="PDBsum" id="4MSJ"/>
<dbReference type="PDBsum" id="4MSM"/>
<dbReference type="PDBsum" id="4MSQ"/>
<dbReference type="PDBsum" id="4NQL"/>
<dbReference type="PDBsum" id="4PQT"/>
<dbReference type="PDBsum" id="4ZD4"/>
<dbReference type="PDBsum" id="4ZD5"/>
<dbReference type="PDBsum" id="4ZFR"/>
<dbReference type="PDBsum" id="4ZFT"/>
<dbReference type="PDBsum" id="7LM3"/>
<dbReference type="SMR" id="Q9P371"/>
<dbReference type="BioGRID" id="279060">
    <property type="interactions" value="6"/>
</dbReference>
<dbReference type="FunCoup" id="Q9P371">
    <property type="interactions" value="229"/>
</dbReference>
<dbReference type="STRING" id="284812.Q9P371"/>
<dbReference type="MEROPS" id="M67.A14"/>
<dbReference type="iPTMnet" id="Q9P371"/>
<dbReference type="PaxDb" id="4896-SPAC19B12.10.1"/>
<dbReference type="EnsemblFungi" id="SPAC19B12.10.1">
    <property type="protein sequence ID" value="SPAC19B12.10.1:pep"/>
    <property type="gene ID" value="SPAC19B12.10"/>
</dbReference>
<dbReference type="PomBase" id="SPAC19B12.10">
    <property type="gene designation" value="sst2"/>
</dbReference>
<dbReference type="VEuPathDB" id="FungiDB:SPAC19B12.10"/>
<dbReference type="eggNOG" id="KOG2880">
    <property type="taxonomic scope" value="Eukaryota"/>
</dbReference>
<dbReference type="HOGENOM" id="CLU_023304_4_0_1"/>
<dbReference type="InParanoid" id="Q9P371"/>
<dbReference type="OMA" id="EATTDTC"/>
<dbReference type="PhylomeDB" id="Q9P371"/>
<dbReference type="Reactome" id="R-SPO-5689901">
    <property type="pathway name" value="Metalloprotease DUBs"/>
</dbReference>
<dbReference type="EvolutionaryTrace" id="Q9P371"/>
<dbReference type="PRO" id="PR:Q9P371"/>
<dbReference type="Proteomes" id="UP000002485">
    <property type="component" value="Chromosome I"/>
</dbReference>
<dbReference type="GO" id="GO:0032153">
    <property type="term" value="C:cell division site"/>
    <property type="evidence" value="ECO:0007005"/>
    <property type="project" value="PomBase"/>
</dbReference>
<dbReference type="GO" id="GO:0005737">
    <property type="term" value="C:cytoplasm"/>
    <property type="evidence" value="ECO:0007005"/>
    <property type="project" value="PomBase"/>
</dbReference>
<dbReference type="GO" id="GO:0005768">
    <property type="term" value="C:endosome"/>
    <property type="evidence" value="ECO:0000318"/>
    <property type="project" value="GO_Central"/>
</dbReference>
<dbReference type="GO" id="GO:0016020">
    <property type="term" value="C:membrane"/>
    <property type="evidence" value="ECO:0000318"/>
    <property type="project" value="GO_Central"/>
</dbReference>
<dbReference type="GO" id="GO:0061578">
    <property type="term" value="F:K63-linked deubiquitinase activity"/>
    <property type="evidence" value="ECO:0000314"/>
    <property type="project" value="PomBase"/>
</dbReference>
<dbReference type="GO" id="GO:0070530">
    <property type="term" value="F:K63-linked polyubiquitin modification-dependent protein binding"/>
    <property type="evidence" value="ECO:0000314"/>
    <property type="project" value="PomBase"/>
</dbReference>
<dbReference type="GO" id="GO:0140492">
    <property type="term" value="F:metal-dependent deubiquitinase activity"/>
    <property type="evidence" value="ECO:0000314"/>
    <property type="project" value="PomBase"/>
</dbReference>
<dbReference type="GO" id="GO:0043130">
    <property type="term" value="F:ubiquitin binding"/>
    <property type="evidence" value="ECO:0000353"/>
    <property type="project" value="PomBase"/>
</dbReference>
<dbReference type="GO" id="GO:0008270">
    <property type="term" value="F:zinc ion binding"/>
    <property type="evidence" value="ECO:0000314"/>
    <property type="project" value="PomBase"/>
</dbReference>
<dbReference type="GO" id="GO:0120113">
    <property type="term" value="P:cytoplasm to vacuole targeting by the NVT pathway"/>
    <property type="evidence" value="ECO:0000315"/>
    <property type="project" value="PomBase"/>
</dbReference>
<dbReference type="GO" id="GO:0045324">
    <property type="term" value="P:late endosome to vacuole transport"/>
    <property type="evidence" value="ECO:0000315"/>
    <property type="project" value="PomBase"/>
</dbReference>
<dbReference type="GO" id="GO:0032511">
    <property type="term" value="P:late endosome to vacuole transport via multivesicular body sorting pathway"/>
    <property type="evidence" value="ECO:0000269"/>
    <property type="project" value="PomBase"/>
</dbReference>
<dbReference type="GO" id="GO:0070536">
    <property type="term" value="P:protein K63-linked deubiquitination"/>
    <property type="evidence" value="ECO:0007669"/>
    <property type="project" value="InterPro"/>
</dbReference>
<dbReference type="GO" id="GO:0043328">
    <property type="term" value="P:protein transport to vacuole involved in ubiquitin-dependent protein catabolic process via the multivesicular body sorting pathway"/>
    <property type="evidence" value="ECO:0000315"/>
    <property type="project" value="PomBase"/>
</dbReference>
<dbReference type="CDD" id="cd08066">
    <property type="entry name" value="MPN_AMSH_like"/>
    <property type="match status" value="1"/>
</dbReference>
<dbReference type="FunFam" id="3.40.140.10:FF:000033">
    <property type="entry name" value="AMSH-like protease sst2"/>
    <property type="match status" value="1"/>
</dbReference>
<dbReference type="Gene3D" id="3.40.140.10">
    <property type="entry name" value="Cytidine Deaminase, domain 2"/>
    <property type="match status" value="1"/>
</dbReference>
<dbReference type="Gene3D" id="1.20.58.80">
    <property type="entry name" value="Phosphotransferase system, lactose/cellobiose-type IIA subunit"/>
    <property type="match status" value="1"/>
</dbReference>
<dbReference type="InterPro" id="IPR000555">
    <property type="entry name" value="JAMM/MPN+_dom"/>
</dbReference>
<dbReference type="InterPro" id="IPR037518">
    <property type="entry name" value="MPN"/>
</dbReference>
<dbReference type="InterPro" id="IPR044098">
    <property type="entry name" value="STAMBP/STALP-like_MPN"/>
</dbReference>
<dbReference type="InterPro" id="IPR015063">
    <property type="entry name" value="USP8_dimer"/>
</dbReference>
<dbReference type="PANTHER" id="PTHR12947">
    <property type="entry name" value="AMSH-LIKE PROTEASE"/>
    <property type="match status" value="1"/>
</dbReference>
<dbReference type="PANTHER" id="PTHR12947:SF13">
    <property type="entry name" value="FI19924P1"/>
    <property type="match status" value="1"/>
</dbReference>
<dbReference type="Pfam" id="PF01398">
    <property type="entry name" value="JAB"/>
    <property type="match status" value="1"/>
</dbReference>
<dbReference type="Pfam" id="PF08969">
    <property type="entry name" value="USP8_dimer"/>
    <property type="match status" value="1"/>
</dbReference>
<dbReference type="SMART" id="SM00232">
    <property type="entry name" value="JAB_MPN"/>
    <property type="match status" value="1"/>
</dbReference>
<dbReference type="SUPFAM" id="SSF102712">
    <property type="entry name" value="JAB1/MPN domain"/>
    <property type="match status" value="1"/>
</dbReference>
<dbReference type="SUPFAM" id="SSF140856">
    <property type="entry name" value="USP8 N-terminal domain-like"/>
    <property type="match status" value="1"/>
</dbReference>
<dbReference type="PROSITE" id="PS50249">
    <property type="entry name" value="MPN"/>
    <property type="match status" value="1"/>
</dbReference>
<sequence>MNILQGSEAPLSYEEIASRAGAFDFNKNIPLKNWLRTSTTISKQAHVYVSEHDYSNGVFLLFRYCELFMKCQKHPDAAAYKKELFDYYQGVRNALEEIELIKPIVKEQYEQYQCQKNDLDDLKKLSMKDSQPSLEKPVSYVDEPILEQWALSDLQILPPSSTDLLSPDSQKLSKSSSDLPQFDYPSLNSSPTFNSNLPISSSRFEKTSLSDSKLVSPEPLDDNKDIQFIKKPIYTRTSEPRPKPAGTFKIHAYTEGGKPLRTIYLPKLLKKVFLDVVKPNTKKNLETCGILCGKLRQNAFFITHLVIPLQEATSDTCGTTDEASLFEFQDKHNLLTLGWIHTHPTQTCFMSSVDLHTHCSYQLMLPEAIAIVMAPSKNTSGIFRLLDPEGLQTIVKCRKPGLFHPHEGKVYTMVAQPGHVREINSKLQVVDLRVK</sequence>